<comment type="function">
    <text evidence="2">Involved in pyrimidine base degradation. Catalyzes physiologically the reduction of uracil to 5,6-dihydrouracil (DHU) by using NADH as a specific cosubstrate. It also catalyzes the reverse reaction and the reduction of thymine to 5,6-dihydrothymine (DHT).</text>
</comment>
<comment type="catalytic activity">
    <reaction evidence="2">
        <text>5,6-dihydrouracil + NAD(+) = uracil + NADH + H(+)</text>
        <dbReference type="Rhea" id="RHEA:20189"/>
        <dbReference type="ChEBI" id="CHEBI:15378"/>
        <dbReference type="ChEBI" id="CHEBI:15901"/>
        <dbReference type="ChEBI" id="CHEBI:17568"/>
        <dbReference type="ChEBI" id="CHEBI:57540"/>
        <dbReference type="ChEBI" id="CHEBI:57945"/>
        <dbReference type="EC" id="1.3.1.1"/>
    </reaction>
</comment>
<comment type="catalytic activity">
    <reaction evidence="2">
        <text>5,6-dihydrothymine + NAD(+) = thymine + NADH + H(+)</text>
        <dbReference type="Rhea" id="RHEA:28791"/>
        <dbReference type="ChEBI" id="CHEBI:15378"/>
        <dbReference type="ChEBI" id="CHEBI:17821"/>
        <dbReference type="ChEBI" id="CHEBI:27468"/>
        <dbReference type="ChEBI" id="CHEBI:57540"/>
        <dbReference type="ChEBI" id="CHEBI:57945"/>
        <dbReference type="EC" id="1.3.1.1"/>
    </reaction>
</comment>
<comment type="cofactor">
    <cofactor evidence="3">
        <name>[4Fe-4S] cluster</name>
        <dbReference type="ChEBI" id="CHEBI:49883"/>
    </cofactor>
    <text evidence="3">Binds 2 [4Fe-4S] clusters.</text>
</comment>
<comment type="subunit">
    <text evidence="2">Heterotetramer of 2 PreA and 2 PreT subunits.</text>
</comment>
<comment type="similarity">
    <text evidence="4">Belongs to the dihydropyrimidine dehydrogenase family.</text>
</comment>
<comment type="sequence caution" evidence="4">
    <conflict type="erroneous initiation">
        <sequence resource="EMBL-CDS" id="AAG57285"/>
    </conflict>
    <text>Extended N-terminus.</text>
</comment>
<gene>
    <name type="primary">preA</name>
    <name type="synonym">yeiA</name>
    <name type="ordered locus">Z3402</name>
    <name type="ordered locus">ECs3039</name>
</gene>
<name>PREA_ECO57</name>
<protein>
    <recommendedName>
        <fullName evidence="2">NAD-dependent dihydropyrimidine dehydrogenase subunit PreA</fullName>
        <shortName evidence="2">DPD</shortName>
        <ecNumber evidence="2">1.3.1.1</ecNumber>
    </recommendedName>
    <alternativeName>
        <fullName evidence="2">Dihydrothymine dehydrogenase</fullName>
    </alternativeName>
    <alternativeName>
        <fullName evidence="2">Dihydrouracil dehydrogenase</fullName>
    </alternativeName>
</protein>
<dbReference type="EC" id="1.3.1.1" evidence="2"/>
<dbReference type="EMBL" id="AE005174">
    <property type="protein sequence ID" value="AAG57285.1"/>
    <property type="status" value="ALT_INIT"/>
    <property type="molecule type" value="Genomic_DNA"/>
</dbReference>
<dbReference type="EMBL" id="BA000007">
    <property type="protein sequence ID" value="BAB36462.2"/>
    <property type="molecule type" value="Genomic_DNA"/>
</dbReference>
<dbReference type="PIR" id="A85853">
    <property type="entry name" value="A85853"/>
</dbReference>
<dbReference type="PIR" id="B64983">
    <property type="entry name" value="B64983"/>
</dbReference>
<dbReference type="PIR" id="G91008">
    <property type="entry name" value="G91008"/>
</dbReference>
<dbReference type="RefSeq" id="NP_311066.2">
    <property type="nucleotide sequence ID" value="NC_002695.1"/>
</dbReference>
<dbReference type="RefSeq" id="WP_000956071.1">
    <property type="nucleotide sequence ID" value="NZ_VOAI01000001.1"/>
</dbReference>
<dbReference type="SMR" id="Q8X643"/>
<dbReference type="STRING" id="155864.Z3402"/>
<dbReference type="GeneID" id="916743"/>
<dbReference type="GeneID" id="93775035"/>
<dbReference type="KEGG" id="ece:Z3402"/>
<dbReference type="KEGG" id="ecs:ECs_3039"/>
<dbReference type="PATRIC" id="fig|386585.9.peg.3164"/>
<dbReference type="eggNOG" id="COG0167">
    <property type="taxonomic scope" value="Bacteria"/>
</dbReference>
<dbReference type="eggNOG" id="COG1146">
    <property type="taxonomic scope" value="Bacteria"/>
</dbReference>
<dbReference type="HOGENOM" id="CLU_042042_4_2_6"/>
<dbReference type="OMA" id="FRIVEDM"/>
<dbReference type="Proteomes" id="UP000000558">
    <property type="component" value="Chromosome"/>
</dbReference>
<dbReference type="Proteomes" id="UP000002519">
    <property type="component" value="Chromosome"/>
</dbReference>
<dbReference type="GO" id="GO:0005737">
    <property type="term" value="C:cytoplasm"/>
    <property type="evidence" value="ECO:0007669"/>
    <property type="project" value="InterPro"/>
</dbReference>
<dbReference type="GO" id="GO:0051539">
    <property type="term" value="F:4 iron, 4 sulfur cluster binding"/>
    <property type="evidence" value="ECO:0007669"/>
    <property type="project" value="UniProtKB-KW"/>
</dbReference>
<dbReference type="GO" id="GO:0004159">
    <property type="term" value="F:dihydropyrimidine dehydrogenase (NAD+) activity"/>
    <property type="evidence" value="ECO:0007669"/>
    <property type="project" value="UniProtKB-EC"/>
</dbReference>
<dbReference type="GO" id="GO:0046872">
    <property type="term" value="F:metal ion binding"/>
    <property type="evidence" value="ECO:0007669"/>
    <property type="project" value="UniProtKB-KW"/>
</dbReference>
<dbReference type="GO" id="GO:0003954">
    <property type="term" value="F:NADH dehydrogenase activity"/>
    <property type="evidence" value="ECO:0000250"/>
    <property type="project" value="UniProtKB"/>
</dbReference>
<dbReference type="GO" id="GO:0006208">
    <property type="term" value="P:pyrimidine nucleobase catabolic process"/>
    <property type="evidence" value="ECO:0000250"/>
    <property type="project" value="UniProtKB"/>
</dbReference>
<dbReference type="CDD" id="cd02940">
    <property type="entry name" value="DHPD_FMN"/>
    <property type="match status" value="1"/>
</dbReference>
<dbReference type="FunFam" id="3.20.20.70:FF:000027">
    <property type="entry name" value="Dihydropyrimidine dehydrogenase [NADP(+)]"/>
    <property type="match status" value="1"/>
</dbReference>
<dbReference type="FunFam" id="3.30.70.20:FF:000031">
    <property type="entry name" value="Dihydropyrimidine dehydrogenase subunit B"/>
    <property type="match status" value="1"/>
</dbReference>
<dbReference type="Gene3D" id="3.30.70.20">
    <property type="match status" value="1"/>
</dbReference>
<dbReference type="Gene3D" id="3.20.20.70">
    <property type="entry name" value="Aldolase class I"/>
    <property type="match status" value="1"/>
</dbReference>
<dbReference type="InterPro" id="IPR017896">
    <property type="entry name" value="4Fe4S_Fe-S-bd"/>
</dbReference>
<dbReference type="InterPro" id="IPR017900">
    <property type="entry name" value="4Fe4S_Fe_S_CS"/>
</dbReference>
<dbReference type="InterPro" id="IPR013785">
    <property type="entry name" value="Aldolase_TIM"/>
</dbReference>
<dbReference type="InterPro" id="IPR005720">
    <property type="entry name" value="Dihydroorotate_DH_cat"/>
</dbReference>
<dbReference type="NCBIfam" id="NF006183">
    <property type="entry name" value="PRK08318.1"/>
    <property type="match status" value="1"/>
</dbReference>
<dbReference type="PANTHER" id="PTHR43073">
    <property type="entry name" value="DIHYDROPYRIMIDINE DEHYDROGENASE [NADP(+)]"/>
    <property type="match status" value="1"/>
</dbReference>
<dbReference type="PANTHER" id="PTHR43073:SF2">
    <property type="entry name" value="DIHYDROPYRIMIDINE DEHYDROGENASE [NADP(+)]"/>
    <property type="match status" value="1"/>
</dbReference>
<dbReference type="Pfam" id="PF01180">
    <property type="entry name" value="DHO_dh"/>
    <property type="match status" value="1"/>
</dbReference>
<dbReference type="Pfam" id="PF14697">
    <property type="entry name" value="Fer4_21"/>
    <property type="match status" value="1"/>
</dbReference>
<dbReference type="SUPFAM" id="SSF54862">
    <property type="entry name" value="4Fe-4S ferredoxins"/>
    <property type="match status" value="1"/>
</dbReference>
<dbReference type="SUPFAM" id="SSF51395">
    <property type="entry name" value="FMN-linked oxidoreductases"/>
    <property type="match status" value="1"/>
</dbReference>
<dbReference type="PROSITE" id="PS00198">
    <property type="entry name" value="4FE4S_FER_1"/>
    <property type="match status" value="1"/>
</dbReference>
<dbReference type="PROSITE" id="PS51379">
    <property type="entry name" value="4FE4S_FER_2"/>
    <property type="match status" value="2"/>
</dbReference>
<feature type="chain" id="PRO_0000409466" description="NAD-dependent dihydropyrimidine dehydrogenase subunit PreA">
    <location>
        <begin position="1"/>
        <end position="411"/>
    </location>
</feature>
<feature type="domain" description="4Fe-4S ferredoxin-type 1" evidence="3">
    <location>
        <begin position="335"/>
        <end position="367"/>
    </location>
</feature>
<feature type="domain" description="4Fe-4S ferredoxin-type 2" evidence="3">
    <location>
        <begin position="369"/>
        <end position="398"/>
    </location>
</feature>
<feature type="active site" description="Nucleophile" evidence="1">
    <location>
        <position position="137"/>
    </location>
</feature>
<feature type="binding site" evidence="1">
    <location>
        <position position="76"/>
    </location>
    <ligand>
        <name>substrate</name>
    </ligand>
</feature>
<feature type="binding site" evidence="1">
    <location>
        <begin position="134"/>
        <end position="136"/>
    </location>
    <ligand>
        <name>substrate</name>
    </ligand>
</feature>
<feature type="binding site" evidence="1">
    <location>
        <begin position="201"/>
        <end position="202"/>
    </location>
    <ligand>
        <name>substrate</name>
    </ligand>
</feature>
<feature type="binding site" evidence="3">
    <location>
        <position position="344"/>
    </location>
    <ligand>
        <name>[4Fe-4S] cluster</name>
        <dbReference type="ChEBI" id="CHEBI:49883"/>
        <label>1</label>
    </ligand>
</feature>
<feature type="binding site" evidence="3">
    <location>
        <position position="347"/>
    </location>
    <ligand>
        <name>[4Fe-4S] cluster</name>
        <dbReference type="ChEBI" id="CHEBI:49883"/>
        <label>1</label>
    </ligand>
</feature>
<feature type="binding site" evidence="3">
    <location>
        <position position="350"/>
    </location>
    <ligand>
        <name>[4Fe-4S] cluster</name>
        <dbReference type="ChEBI" id="CHEBI:49883"/>
        <label>1</label>
    </ligand>
</feature>
<feature type="binding site" evidence="3">
    <location>
        <position position="354"/>
    </location>
    <ligand>
        <name>[4Fe-4S] cluster</name>
        <dbReference type="ChEBI" id="CHEBI:49883"/>
        <label>2</label>
    </ligand>
</feature>
<feature type="binding site" evidence="3">
    <location>
        <position position="378"/>
    </location>
    <ligand>
        <name>[4Fe-4S] cluster</name>
        <dbReference type="ChEBI" id="CHEBI:49883"/>
        <label>2</label>
    </ligand>
</feature>
<feature type="binding site" evidence="3">
    <location>
        <position position="381"/>
    </location>
    <ligand>
        <name>[4Fe-4S] cluster</name>
        <dbReference type="ChEBI" id="CHEBI:49883"/>
        <label>2</label>
    </ligand>
</feature>
<feature type="binding site" evidence="3">
    <location>
        <position position="384"/>
    </location>
    <ligand>
        <name>[4Fe-4S] cluster</name>
        <dbReference type="ChEBI" id="CHEBI:49883"/>
        <label>2</label>
    </ligand>
</feature>
<feature type="binding site" evidence="3">
    <location>
        <position position="388"/>
    </location>
    <ligand>
        <name>[4Fe-4S] cluster</name>
        <dbReference type="ChEBI" id="CHEBI:49883"/>
        <label>1</label>
    </ligand>
</feature>
<organism>
    <name type="scientific">Escherichia coli O157:H7</name>
    <dbReference type="NCBI Taxonomy" id="83334"/>
    <lineage>
        <taxon>Bacteria</taxon>
        <taxon>Pseudomonadati</taxon>
        <taxon>Pseudomonadota</taxon>
        <taxon>Gammaproteobacteria</taxon>
        <taxon>Enterobacterales</taxon>
        <taxon>Enterobacteriaceae</taxon>
        <taxon>Escherichia</taxon>
    </lineage>
</organism>
<accession>Q8X643</accession>
<accession>Q7AC92</accession>
<reference key="1">
    <citation type="journal article" date="2001" name="Nature">
        <title>Genome sequence of enterohaemorrhagic Escherichia coli O157:H7.</title>
        <authorList>
            <person name="Perna N.T."/>
            <person name="Plunkett G. III"/>
            <person name="Burland V."/>
            <person name="Mau B."/>
            <person name="Glasner J.D."/>
            <person name="Rose D.J."/>
            <person name="Mayhew G.F."/>
            <person name="Evans P.S."/>
            <person name="Gregor J."/>
            <person name="Kirkpatrick H.A."/>
            <person name="Posfai G."/>
            <person name="Hackett J."/>
            <person name="Klink S."/>
            <person name="Boutin A."/>
            <person name="Shao Y."/>
            <person name="Miller L."/>
            <person name="Grotbeck E.J."/>
            <person name="Davis N.W."/>
            <person name="Lim A."/>
            <person name="Dimalanta E.T."/>
            <person name="Potamousis K."/>
            <person name="Apodaca J."/>
            <person name="Anantharaman T.S."/>
            <person name="Lin J."/>
            <person name="Yen G."/>
            <person name="Schwartz D.C."/>
            <person name="Welch R.A."/>
            <person name="Blattner F.R."/>
        </authorList>
    </citation>
    <scope>NUCLEOTIDE SEQUENCE [LARGE SCALE GENOMIC DNA]</scope>
    <source>
        <strain>O157:H7 / EDL933 / ATCC 700927 / EHEC</strain>
    </source>
</reference>
<reference key="2">
    <citation type="journal article" date="2001" name="DNA Res.">
        <title>Complete genome sequence of enterohemorrhagic Escherichia coli O157:H7 and genomic comparison with a laboratory strain K-12.</title>
        <authorList>
            <person name="Hayashi T."/>
            <person name="Makino K."/>
            <person name="Ohnishi M."/>
            <person name="Kurokawa K."/>
            <person name="Ishii K."/>
            <person name="Yokoyama K."/>
            <person name="Han C.-G."/>
            <person name="Ohtsubo E."/>
            <person name="Nakayama K."/>
            <person name="Murata T."/>
            <person name="Tanaka M."/>
            <person name="Tobe T."/>
            <person name="Iida T."/>
            <person name="Takami H."/>
            <person name="Honda T."/>
            <person name="Sasakawa C."/>
            <person name="Ogasawara N."/>
            <person name="Yasunaga T."/>
            <person name="Kuhara S."/>
            <person name="Shiba T."/>
            <person name="Hattori M."/>
            <person name="Shinagawa H."/>
        </authorList>
    </citation>
    <scope>NUCLEOTIDE SEQUENCE [LARGE SCALE GENOMIC DNA]</scope>
    <source>
        <strain>O157:H7 / Sakai / RIMD 0509952 / EHEC</strain>
    </source>
</reference>
<keyword id="KW-0004">4Fe-4S</keyword>
<keyword id="KW-0408">Iron</keyword>
<keyword id="KW-0411">Iron-sulfur</keyword>
<keyword id="KW-0479">Metal-binding</keyword>
<keyword id="KW-0520">NAD</keyword>
<keyword id="KW-0560">Oxidoreductase</keyword>
<keyword id="KW-1185">Reference proteome</keyword>
<keyword id="KW-0677">Repeat</keyword>
<proteinExistence type="inferred from homology"/>
<evidence type="ECO:0000250" key="1"/>
<evidence type="ECO:0000250" key="2">
    <source>
        <dbReference type="UniProtKB" id="P25889"/>
    </source>
</evidence>
<evidence type="ECO:0000255" key="3">
    <source>
        <dbReference type="PROSITE-ProRule" id="PRU00711"/>
    </source>
</evidence>
<evidence type="ECO:0000305" key="4"/>
<sequence>MLTKDLSITFCGVKFPNPFCLSSSPVGNCYEMCAKAYDTGWGGVVFKTIGFFIANEVSPRFDHLVKEDTGFIGFKNMEQIAEHPLEENLAALRRLKEDYPDKVLIASIMGENEQQWEELARLVQEAGADMIECNFSCPQMTSHAMGSDVGQSPELVEKYCRAVKRGSTLPMLAKMTPNIGDMCEVALAAKRGGADGIAAINTVKSITNIDLNQKIGMPIVNGKSSISGYSGKAVKPIALRFIQQMRTHPELRDFPISGIGGIETWEDAAEFLLLGAATLQVTTGIMQYGYRIVEDMASGLSHYLADQGFDSLQEMVGLANNNIVPAEDLDRSYIVYPRINLDKCVGCGRCYISCYDGGHQAMEWSEKTRTPHCNTEKCVGCLLCGHVCPVGCIELGEVKFKKGEKEHPVTL</sequence>